<reference key="1">
    <citation type="journal article" date="1994" name="Gene">
        <title>The cDNA sequence encoding mouse Mg2+ -dependent protein phosphatase alpha.</title>
        <authorList>
            <person name="Kato S."/>
            <person name="Kobayashi T."/>
            <person name="Terasawa T."/>
            <person name="Ohnishi M."/>
            <person name="Sasahara Y."/>
            <person name="Kanamaru R."/>
            <person name="Tamura S."/>
        </authorList>
    </citation>
    <scope>NUCLEOTIDE SEQUENCE [MRNA]</scope>
    <source>
        <tissue>Brain</tissue>
    </source>
</reference>
<reference key="2">
    <citation type="journal article" date="2004" name="Genome Res.">
        <title>The status, quality, and expansion of the NIH full-length cDNA project: the Mammalian Gene Collection (MGC).</title>
        <authorList>
            <consortium name="The MGC Project Team"/>
        </authorList>
    </citation>
    <scope>NUCLEOTIDE SEQUENCE [LARGE SCALE MRNA]</scope>
    <source>
        <strain>FVB/N</strain>
        <tissue>Mammary gland</tissue>
    </source>
</reference>
<reference key="3">
    <citation type="journal article" date="2007" name="Proc. Natl. Acad. Sci. U.S.A.">
        <title>Large-scale phosphorylation analysis of mouse liver.</title>
        <authorList>
            <person name="Villen J."/>
            <person name="Beausoleil S.A."/>
            <person name="Gerber S.A."/>
            <person name="Gygi S.P."/>
        </authorList>
    </citation>
    <scope>IDENTIFICATION BY MASS SPECTROMETRY [LARGE SCALE ANALYSIS]</scope>
    <source>
        <tissue>Liver</tissue>
    </source>
</reference>
<reference key="4">
    <citation type="journal article" date="2010" name="Cell">
        <title>A tissue-specific atlas of mouse protein phosphorylation and expression.</title>
        <authorList>
            <person name="Huttlin E.L."/>
            <person name="Jedrychowski M.P."/>
            <person name="Elias J.E."/>
            <person name="Goswami T."/>
            <person name="Rad R."/>
            <person name="Beausoleil S.A."/>
            <person name="Villen J."/>
            <person name="Haas W."/>
            <person name="Sowa M.E."/>
            <person name="Gygi S.P."/>
        </authorList>
    </citation>
    <scope>PHOSPHORYLATION [LARGE SCALE ANALYSIS] AT SER-375 AND SER-377</scope>
    <scope>IDENTIFICATION BY MASS SPECTROMETRY [LARGE SCALE ANALYSIS]</scope>
    <source>
        <tissue>Brain</tissue>
        <tissue>Brown adipose tissue</tissue>
        <tissue>Heart</tissue>
        <tissue>Kidney</tissue>
        <tissue>Liver</tissue>
        <tissue>Lung</tissue>
        <tissue>Pancreas</tissue>
        <tissue>Spleen</tissue>
        <tissue>Testis</tissue>
    </source>
</reference>
<reference key="5">
    <citation type="journal article" date="2012" name="Cell. Signal.">
        <title>Protein phosphatase 5 modulates SMAD3 function in the transforming growth factor-beta pathway.</title>
        <authorList>
            <person name="Bruce D.L."/>
            <person name="Macartney T."/>
            <person name="Yong W."/>
            <person name="Shou W."/>
            <person name="Sapkota G.P."/>
        </authorList>
    </citation>
    <scope>SUBCELLULAR LOCATION</scope>
</reference>
<reference key="6">
    <citation type="journal article" date="2013" name="Biochem. J.">
        <title>N-Myristoylation is essential for protein phosphatases PPM1A and PPM1B to dephosphorylate their physiological substrates in cells.</title>
        <authorList>
            <person name="Chida T."/>
            <person name="Ando M."/>
            <person name="Matsuki T."/>
            <person name="Masu Y."/>
            <person name="Nagaura Y."/>
            <person name="Takano-Yamamoto T."/>
            <person name="Tamura S."/>
            <person name="Kobayashi T."/>
        </authorList>
    </citation>
    <scope>FUNCTION</scope>
    <scope>SUBCELLULAR LOCATION</scope>
    <scope>MYRISTOYLATION AT GLY-2</scope>
</reference>
<dbReference type="EC" id="3.1.3.16"/>
<dbReference type="EMBL" id="D28117">
    <property type="protein sequence ID" value="BAA05662.1"/>
    <property type="molecule type" value="mRNA"/>
</dbReference>
<dbReference type="EMBL" id="BC008595">
    <property type="protein sequence ID" value="AAH08595.1"/>
    <property type="molecule type" value="mRNA"/>
</dbReference>
<dbReference type="CCDS" id="CCDS25970.1"/>
<dbReference type="PIR" id="I53823">
    <property type="entry name" value="I53823"/>
</dbReference>
<dbReference type="RefSeq" id="NP_032936.1">
    <property type="nucleotide sequence ID" value="NM_008910.3"/>
</dbReference>
<dbReference type="RefSeq" id="XP_006515666.1">
    <property type="nucleotide sequence ID" value="XM_006515603.3"/>
</dbReference>
<dbReference type="RefSeq" id="XP_036013149.1">
    <property type="nucleotide sequence ID" value="XM_036157256.1"/>
</dbReference>
<dbReference type="SMR" id="P49443"/>
<dbReference type="BioGRID" id="202332">
    <property type="interactions" value="12"/>
</dbReference>
<dbReference type="FunCoup" id="P49443">
    <property type="interactions" value="3267"/>
</dbReference>
<dbReference type="STRING" id="10090.ENSMUSP00000021514"/>
<dbReference type="ChEMBL" id="CHEMBL3309056"/>
<dbReference type="iPTMnet" id="P49443"/>
<dbReference type="PhosphoSitePlus" id="P49443"/>
<dbReference type="SwissPalm" id="P49443"/>
<dbReference type="jPOST" id="P49443"/>
<dbReference type="PaxDb" id="10090-ENSMUSP00000021514"/>
<dbReference type="PeptideAtlas" id="P49443"/>
<dbReference type="ProteomicsDB" id="291835"/>
<dbReference type="Pumba" id="P49443"/>
<dbReference type="Antibodypedia" id="11485">
    <property type="antibodies" value="463 antibodies from 38 providers"/>
</dbReference>
<dbReference type="DNASU" id="19042"/>
<dbReference type="Ensembl" id="ENSMUST00000021514.10">
    <property type="protein sequence ID" value="ENSMUSP00000021514.9"/>
    <property type="gene ID" value="ENSMUSG00000021096.12"/>
</dbReference>
<dbReference type="GeneID" id="19042"/>
<dbReference type="KEGG" id="mmu:19042"/>
<dbReference type="UCSC" id="uc007nvu.2">
    <property type="organism name" value="mouse"/>
</dbReference>
<dbReference type="AGR" id="MGI:99878"/>
<dbReference type="CTD" id="5494"/>
<dbReference type="MGI" id="MGI:99878">
    <property type="gene designation" value="Ppm1a"/>
</dbReference>
<dbReference type="VEuPathDB" id="HostDB:ENSMUSG00000021096"/>
<dbReference type="eggNOG" id="KOG0697">
    <property type="taxonomic scope" value="Eukaryota"/>
</dbReference>
<dbReference type="GeneTree" id="ENSGT00940000154832"/>
<dbReference type="HOGENOM" id="CLU_013173_4_0_1"/>
<dbReference type="InParanoid" id="P49443"/>
<dbReference type="OMA" id="GPGIRNQ"/>
<dbReference type="OrthoDB" id="10264738at2759"/>
<dbReference type="PhylomeDB" id="P49443"/>
<dbReference type="TreeFam" id="TF313590"/>
<dbReference type="Reactome" id="R-MMU-2173795">
    <property type="pathway name" value="Downregulation of SMAD2/3:SMAD4 transcriptional activity"/>
</dbReference>
<dbReference type="Reactome" id="R-MMU-380972">
    <property type="pathway name" value="Energy dependent regulation of mTOR by LKB1-AMPK"/>
</dbReference>
<dbReference type="BioGRID-ORCS" id="19042">
    <property type="hits" value="1 hit in 78 CRISPR screens"/>
</dbReference>
<dbReference type="ChiTaRS" id="Ppm1a">
    <property type="organism name" value="mouse"/>
</dbReference>
<dbReference type="PRO" id="PR:P49443"/>
<dbReference type="Proteomes" id="UP000000589">
    <property type="component" value="Chromosome 12"/>
</dbReference>
<dbReference type="RNAct" id="P49443">
    <property type="molecule type" value="protein"/>
</dbReference>
<dbReference type="Bgee" id="ENSMUSG00000021096">
    <property type="expression patterns" value="Expressed in cleaving embryo and 277 other cell types or tissues"/>
</dbReference>
<dbReference type="ExpressionAtlas" id="P49443">
    <property type="expression patterns" value="baseline and differential"/>
</dbReference>
<dbReference type="GO" id="GO:0005829">
    <property type="term" value="C:cytosol"/>
    <property type="evidence" value="ECO:0000314"/>
    <property type="project" value="UniProtKB"/>
</dbReference>
<dbReference type="GO" id="GO:0016020">
    <property type="term" value="C:membrane"/>
    <property type="evidence" value="ECO:0000314"/>
    <property type="project" value="UniProtKB"/>
</dbReference>
<dbReference type="GO" id="GO:0005634">
    <property type="term" value="C:nucleus"/>
    <property type="evidence" value="ECO:0000314"/>
    <property type="project" value="MGI"/>
</dbReference>
<dbReference type="GO" id="GO:0005886">
    <property type="term" value="C:plasma membrane"/>
    <property type="evidence" value="ECO:0007669"/>
    <property type="project" value="Ensembl"/>
</dbReference>
<dbReference type="GO" id="GO:0033192">
    <property type="term" value="F:calmodulin-dependent protein phosphatase activity"/>
    <property type="evidence" value="ECO:0007669"/>
    <property type="project" value="Ensembl"/>
</dbReference>
<dbReference type="GO" id="GO:0000287">
    <property type="term" value="F:magnesium ion binding"/>
    <property type="evidence" value="ECO:0007669"/>
    <property type="project" value="InterPro"/>
</dbReference>
<dbReference type="GO" id="GO:0030145">
    <property type="term" value="F:manganese ion binding"/>
    <property type="evidence" value="ECO:0007669"/>
    <property type="project" value="InterPro"/>
</dbReference>
<dbReference type="GO" id="GO:0004721">
    <property type="term" value="F:phosphoprotein phosphatase activity"/>
    <property type="evidence" value="ECO:0000314"/>
    <property type="project" value="MGI"/>
</dbReference>
<dbReference type="GO" id="GO:0070412">
    <property type="term" value="F:R-SMAD binding"/>
    <property type="evidence" value="ECO:0000250"/>
    <property type="project" value="UniProtKB"/>
</dbReference>
<dbReference type="GO" id="GO:0071560">
    <property type="term" value="P:cellular response to transforming growth factor beta stimulus"/>
    <property type="evidence" value="ECO:0000314"/>
    <property type="project" value="MGI"/>
</dbReference>
<dbReference type="GO" id="GO:0006499">
    <property type="term" value="P:N-terminal protein myristoylation"/>
    <property type="evidence" value="ECO:0000314"/>
    <property type="project" value="UniProtKB"/>
</dbReference>
<dbReference type="GO" id="GO:0030514">
    <property type="term" value="P:negative regulation of BMP signaling pathway"/>
    <property type="evidence" value="ECO:0000315"/>
    <property type="project" value="MGI"/>
</dbReference>
<dbReference type="GO" id="GO:0043124">
    <property type="term" value="P:negative regulation of canonical NF-kappaB signal transduction"/>
    <property type="evidence" value="ECO:0000250"/>
    <property type="project" value="UniProtKB"/>
</dbReference>
<dbReference type="GO" id="GO:1901223">
    <property type="term" value="P:negative regulation of non-canonical NF-kappaB signal transduction"/>
    <property type="evidence" value="ECO:0000250"/>
    <property type="project" value="UniProtKB"/>
</dbReference>
<dbReference type="GO" id="GO:0030512">
    <property type="term" value="P:negative regulation of transforming growth factor beta receptor signaling pathway"/>
    <property type="evidence" value="ECO:0007669"/>
    <property type="project" value="Ensembl"/>
</dbReference>
<dbReference type="GO" id="GO:0090263">
    <property type="term" value="P:positive regulation of canonical Wnt signaling pathway"/>
    <property type="evidence" value="ECO:0007669"/>
    <property type="project" value="Ensembl"/>
</dbReference>
<dbReference type="GO" id="GO:0045893">
    <property type="term" value="P:positive regulation of DNA-templated transcription"/>
    <property type="evidence" value="ECO:0007669"/>
    <property type="project" value="Ensembl"/>
</dbReference>
<dbReference type="GO" id="GO:0046827">
    <property type="term" value="P:positive regulation of protein export from nucleus"/>
    <property type="evidence" value="ECO:0000315"/>
    <property type="project" value="MGI"/>
</dbReference>
<dbReference type="GO" id="GO:0006470">
    <property type="term" value="P:protein dephosphorylation"/>
    <property type="evidence" value="ECO:0000315"/>
    <property type="project" value="UniProtKB"/>
</dbReference>
<dbReference type="GO" id="GO:0006611">
    <property type="term" value="P:protein export from nucleus"/>
    <property type="evidence" value="ECO:0000315"/>
    <property type="project" value="MGI"/>
</dbReference>
<dbReference type="CDD" id="cd00143">
    <property type="entry name" value="PP2Cc"/>
    <property type="match status" value="1"/>
</dbReference>
<dbReference type="FunFam" id="3.60.40.10:FF:000001">
    <property type="entry name" value="protein phosphatase 1B isoform X1"/>
    <property type="match status" value="1"/>
</dbReference>
<dbReference type="FunFam" id="1.10.10.430:FF:000002">
    <property type="entry name" value="Protein phosphatase, Mg2+/Mn2+ dependent 1A"/>
    <property type="match status" value="1"/>
</dbReference>
<dbReference type="Gene3D" id="1.10.10.430">
    <property type="entry name" value="Phosphatase 2C, C-terminal domain suprefamily"/>
    <property type="match status" value="1"/>
</dbReference>
<dbReference type="Gene3D" id="3.60.40.10">
    <property type="entry name" value="PPM-type phosphatase domain"/>
    <property type="match status" value="1"/>
</dbReference>
<dbReference type="InterPro" id="IPR015655">
    <property type="entry name" value="PP2C"/>
</dbReference>
<dbReference type="InterPro" id="IPR000222">
    <property type="entry name" value="PP2C_BS"/>
</dbReference>
<dbReference type="InterPro" id="IPR012911">
    <property type="entry name" value="PP2C_C"/>
</dbReference>
<dbReference type="InterPro" id="IPR036580">
    <property type="entry name" value="PP2C_C_sf"/>
</dbReference>
<dbReference type="InterPro" id="IPR036457">
    <property type="entry name" value="PPM-type-like_dom_sf"/>
</dbReference>
<dbReference type="InterPro" id="IPR001932">
    <property type="entry name" value="PPM-type_phosphatase-like_dom"/>
</dbReference>
<dbReference type="PANTHER" id="PTHR47992">
    <property type="entry name" value="PROTEIN PHOSPHATASE"/>
    <property type="match status" value="1"/>
</dbReference>
<dbReference type="Pfam" id="PF00481">
    <property type="entry name" value="PP2C"/>
    <property type="match status" value="1"/>
</dbReference>
<dbReference type="Pfam" id="PF07830">
    <property type="entry name" value="PP2C_C"/>
    <property type="match status" value="1"/>
</dbReference>
<dbReference type="SMART" id="SM00332">
    <property type="entry name" value="PP2Cc"/>
    <property type="match status" value="1"/>
</dbReference>
<dbReference type="SUPFAM" id="SSF81606">
    <property type="entry name" value="PP2C-like"/>
    <property type="match status" value="1"/>
</dbReference>
<dbReference type="SUPFAM" id="SSF81601">
    <property type="entry name" value="Protein serine/threonine phosphatase 2C, C-terminal domain"/>
    <property type="match status" value="1"/>
</dbReference>
<dbReference type="PROSITE" id="PS01032">
    <property type="entry name" value="PPM_1"/>
    <property type="match status" value="1"/>
</dbReference>
<dbReference type="PROSITE" id="PS51746">
    <property type="entry name" value="PPM_2"/>
    <property type="match status" value="1"/>
</dbReference>
<keyword id="KW-0963">Cytoplasm</keyword>
<keyword id="KW-0378">Hydrolase</keyword>
<keyword id="KW-0449">Lipoprotein</keyword>
<keyword id="KW-0460">Magnesium</keyword>
<keyword id="KW-0464">Manganese</keyword>
<keyword id="KW-0472">Membrane</keyword>
<keyword id="KW-0479">Metal-binding</keyword>
<keyword id="KW-0519">Myristate</keyword>
<keyword id="KW-0539">Nucleus</keyword>
<keyword id="KW-0597">Phosphoprotein</keyword>
<keyword id="KW-0904">Protein phosphatase</keyword>
<keyword id="KW-1185">Reference proteome</keyword>
<organism>
    <name type="scientific">Mus musculus</name>
    <name type="common">Mouse</name>
    <dbReference type="NCBI Taxonomy" id="10090"/>
    <lineage>
        <taxon>Eukaryota</taxon>
        <taxon>Metazoa</taxon>
        <taxon>Chordata</taxon>
        <taxon>Craniata</taxon>
        <taxon>Vertebrata</taxon>
        <taxon>Euteleostomi</taxon>
        <taxon>Mammalia</taxon>
        <taxon>Eutheria</taxon>
        <taxon>Euarchontoglires</taxon>
        <taxon>Glires</taxon>
        <taxon>Rodentia</taxon>
        <taxon>Myomorpha</taxon>
        <taxon>Muroidea</taxon>
        <taxon>Muridae</taxon>
        <taxon>Murinae</taxon>
        <taxon>Mus</taxon>
        <taxon>Mus</taxon>
    </lineage>
</organism>
<accession>P49443</accession>
<name>PPM1A_MOUSE</name>
<feature type="initiator methionine" description="Removed" evidence="5">
    <location>
        <position position="1"/>
    </location>
</feature>
<feature type="chain" id="PRO_0000057742" description="Protein phosphatase 1A">
    <location>
        <begin position="2"/>
        <end position="382"/>
    </location>
</feature>
<feature type="domain" description="PPM-type phosphatase" evidence="3">
    <location>
        <begin position="23"/>
        <end position="291"/>
    </location>
</feature>
<feature type="binding site" evidence="1">
    <location>
        <position position="60"/>
    </location>
    <ligand>
        <name>Mn(2+)</name>
        <dbReference type="ChEBI" id="CHEBI:29035"/>
        <label>1</label>
    </ligand>
</feature>
<feature type="binding site" evidence="1">
    <location>
        <position position="60"/>
    </location>
    <ligand>
        <name>Mn(2+)</name>
        <dbReference type="ChEBI" id="CHEBI:29035"/>
        <label>2</label>
    </ligand>
</feature>
<feature type="binding site" evidence="1">
    <location>
        <position position="61"/>
    </location>
    <ligand>
        <name>Mn(2+)</name>
        <dbReference type="ChEBI" id="CHEBI:29035"/>
        <label>1</label>
    </ligand>
</feature>
<feature type="binding site" evidence="1">
    <location>
        <position position="239"/>
    </location>
    <ligand>
        <name>Mn(2+)</name>
        <dbReference type="ChEBI" id="CHEBI:29035"/>
        <label>2</label>
    </ligand>
</feature>
<feature type="binding site" evidence="1">
    <location>
        <position position="282"/>
    </location>
    <ligand>
        <name>Mn(2+)</name>
        <dbReference type="ChEBI" id="CHEBI:29035"/>
        <label>2</label>
    </ligand>
</feature>
<feature type="modified residue" description="Phosphoserine" evidence="7">
    <location>
        <position position="375"/>
    </location>
</feature>
<feature type="modified residue" description="Phosphoserine" evidence="7">
    <location>
        <position position="377"/>
    </location>
</feature>
<feature type="lipid moiety-binding region" description="N-myristoyl glycine" evidence="5">
    <location>
        <position position="2"/>
    </location>
</feature>
<protein>
    <recommendedName>
        <fullName>Protein phosphatase 1A</fullName>
        <ecNumber>3.1.3.16</ecNumber>
    </recommendedName>
    <alternativeName>
        <fullName>Protein phosphatase 2C isoform alpha</fullName>
        <shortName>PP2C-alpha</shortName>
    </alternativeName>
    <alternativeName>
        <fullName>Protein phosphatase IA</fullName>
    </alternativeName>
</protein>
<gene>
    <name type="primary">Ppm1a</name>
    <name type="synonym">Pppm1a</name>
</gene>
<proteinExistence type="evidence at protein level"/>
<comment type="function">
    <text evidence="1 5">Enzyme with a broad specificity. Negatively regulates TGF-beta signaling through dephosphorylating SMAD2 and SMAD3, resulting in their dissociation from SMAD4, nuclear export of the SMADs and termination of the TGF-beta-mediated signaling (By similarity). Dephosphorylates PRKAA1 and PRKAA2. Plays an important role in the termination of TNF-alpha-mediated NF-kappa-B activation through dephosphorylating and inactivating IKBKB/IKKB.</text>
</comment>
<comment type="catalytic activity">
    <reaction>
        <text>O-phospho-L-seryl-[protein] + H2O = L-seryl-[protein] + phosphate</text>
        <dbReference type="Rhea" id="RHEA:20629"/>
        <dbReference type="Rhea" id="RHEA-COMP:9863"/>
        <dbReference type="Rhea" id="RHEA-COMP:11604"/>
        <dbReference type="ChEBI" id="CHEBI:15377"/>
        <dbReference type="ChEBI" id="CHEBI:29999"/>
        <dbReference type="ChEBI" id="CHEBI:43474"/>
        <dbReference type="ChEBI" id="CHEBI:83421"/>
        <dbReference type="EC" id="3.1.3.16"/>
    </reaction>
</comment>
<comment type="catalytic activity">
    <reaction>
        <text>O-phospho-L-threonyl-[protein] + H2O = L-threonyl-[protein] + phosphate</text>
        <dbReference type="Rhea" id="RHEA:47004"/>
        <dbReference type="Rhea" id="RHEA-COMP:11060"/>
        <dbReference type="Rhea" id="RHEA-COMP:11605"/>
        <dbReference type="ChEBI" id="CHEBI:15377"/>
        <dbReference type="ChEBI" id="CHEBI:30013"/>
        <dbReference type="ChEBI" id="CHEBI:43474"/>
        <dbReference type="ChEBI" id="CHEBI:61977"/>
        <dbReference type="EC" id="3.1.3.16"/>
    </reaction>
</comment>
<comment type="cofactor">
    <cofactor>
        <name>Mg(2+)</name>
        <dbReference type="ChEBI" id="CHEBI:18420"/>
    </cofactor>
    <cofactor>
        <name>Mn(2+)</name>
        <dbReference type="ChEBI" id="CHEBI:29035"/>
    </cofactor>
    <text>Binds 2 magnesium or manganese ions per subunit.</text>
</comment>
<comment type="subunit">
    <text evidence="1">Monomer (By similarity). Interacts with SMAD2; the interaction dephosphorylates SMAD2 in its C-terminal SXS motif resulting in disruption of the SMAD2/SMAD4 complex, SMAD2 nuclear export and termination of the TGF-beta-mediated signaling. Interacts with SMAD2; the interaction dephosphorylates SMAD2 in its C-terminal SXS motif resulting in disruption of the SMAD2/SMAD4 complex, SMAD2 nuclear export and termination of the TGF-beta-mediated signaling (By similarity). Interacts with the phosphorylated form of IKBKB/IKKB (By similarity).</text>
</comment>
<comment type="subcellular location">
    <subcellularLocation>
        <location evidence="2">Nucleus</location>
    </subcellularLocation>
    <subcellularLocation>
        <location evidence="4 5">Cytoplasm</location>
        <location evidence="4 5">Cytosol</location>
    </subcellularLocation>
    <subcellularLocation>
        <location evidence="5">Membrane</location>
        <topology evidence="5">Lipid-anchor</topology>
    </subcellularLocation>
    <text evidence="5">Weakly associates at the membrane and N-myristoylation mediates the membrane localization.</text>
</comment>
<comment type="PTM">
    <text evidence="5">N-myristoylation is essential for the recognition of its substrates for dephosphorylation.</text>
</comment>
<comment type="similarity">
    <text evidence="6">Belongs to the PP2C family.</text>
</comment>
<sequence length="382" mass="42433">MGAFLDKPKMEKHNAQGQGNGLRYGLSSMQGWRVEMEDAHTAVIGLPSGLETWSFFAVYDGHAGSQVAKYCCEHLLDHITNNQDFRGSAGAPSVENVKNGIRTGFLEIDEHMRVMSEKKHGADRSGSTAVGVLISPQHTYFINCGDSRGLLCRNRKVHFFTQDHKPSNPLEKERIQNAGGSVMIQRVNGSLAVSRALGDFDYKCVHGKGPTEQLVSPEPEVHDIERSEEDDQFIILACDGIWDVMGNEELCDFVRSRLEVTDDLEKVCNEVVDTCLYKGSRDNMSVILICFPSAPKVSAEAVKKEAELDKYLESRVEEIIKKQVEGVPDLVHVMRTLASENIPSLPPGGELASKRNVIEAVYNRLNPYKNDDTDSASTDDMW</sequence>
<evidence type="ECO:0000250" key="1"/>
<evidence type="ECO:0000250" key="2">
    <source>
        <dbReference type="UniProtKB" id="P35813"/>
    </source>
</evidence>
<evidence type="ECO:0000255" key="3">
    <source>
        <dbReference type="PROSITE-ProRule" id="PRU01082"/>
    </source>
</evidence>
<evidence type="ECO:0000269" key="4">
    <source>
    </source>
</evidence>
<evidence type="ECO:0000269" key="5">
    <source>
    </source>
</evidence>
<evidence type="ECO:0000305" key="6"/>
<evidence type="ECO:0007744" key="7">
    <source>
    </source>
</evidence>